<evidence type="ECO:0000255" key="1">
    <source>
        <dbReference type="HAMAP-Rule" id="MF_00333"/>
    </source>
</evidence>
<sequence>MSAVPVSDVHAYLTGLQDNIVQALEQAGGESFRTDTWQRPEGGGGVSRLIEGGQLLERAGVLFSHVHGTRLPPSASAHRPELAGRSWQAMGVSLVLHPRNPYVPTTHMNVRMFVAAARPGHDENDVFWFGGGLDLTPYYAFEDDARHFHQVCRAALDPHGAAYYPQYKRWCDEYFYLKHRQEMRGVGGVFFDDLNEPGFDASFALLRSVGDAFLPAYLPIVQRRRDTPYTQAQRDFQAYRRGRYVEFNLVFDRGTLFGLQSGGRTESILLSMPPMAQWRYDWQPAAGSPEAALAGFLQPRDWA</sequence>
<feature type="chain" id="PRO_1000119785" description="Oxygen-dependent coproporphyrinogen-III oxidase">
    <location>
        <begin position="1"/>
        <end position="303"/>
    </location>
</feature>
<feature type="region of interest" description="Important for dimerization" evidence="1">
    <location>
        <begin position="244"/>
        <end position="279"/>
    </location>
</feature>
<feature type="active site" description="Proton donor" evidence="1">
    <location>
        <position position="107"/>
    </location>
</feature>
<feature type="binding site" evidence="1">
    <location>
        <position position="93"/>
    </location>
    <ligand>
        <name>substrate</name>
    </ligand>
</feature>
<feature type="binding site" evidence="1">
    <location>
        <position position="97"/>
    </location>
    <ligand>
        <name>a divalent metal cation</name>
        <dbReference type="ChEBI" id="CHEBI:60240"/>
    </ligand>
</feature>
<feature type="binding site" evidence="1">
    <location>
        <position position="107"/>
    </location>
    <ligand>
        <name>a divalent metal cation</name>
        <dbReference type="ChEBI" id="CHEBI:60240"/>
    </ligand>
</feature>
<feature type="binding site" evidence="1">
    <location>
        <begin position="109"/>
        <end position="111"/>
    </location>
    <ligand>
        <name>substrate</name>
    </ligand>
</feature>
<feature type="binding site" evidence="1">
    <location>
        <position position="149"/>
    </location>
    <ligand>
        <name>a divalent metal cation</name>
        <dbReference type="ChEBI" id="CHEBI:60240"/>
    </ligand>
</feature>
<feature type="binding site" evidence="1">
    <location>
        <position position="179"/>
    </location>
    <ligand>
        <name>a divalent metal cation</name>
        <dbReference type="ChEBI" id="CHEBI:60240"/>
    </ligand>
</feature>
<feature type="binding site" evidence="1">
    <location>
        <begin position="262"/>
        <end position="264"/>
    </location>
    <ligand>
        <name>substrate</name>
    </ligand>
</feature>
<feature type="site" description="Important for dimerization" evidence="1">
    <location>
        <position position="179"/>
    </location>
</feature>
<keyword id="KW-0963">Cytoplasm</keyword>
<keyword id="KW-0350">Heme biosynthesis</keyword>
<keyword id="KW-0479">Metal-binding</keyword>
<keyword id="KW-0560">Oxidoreductase</keyword>
<keyword id="KW-0627">Porphyrin biosynthesis</keyword>
<name>HEM6_BORPD</name>
<protein>
    <recommendedName>
        <fullName evidence="1">Oxygen-dependent coproporphyrinogen-III oxidase</fullName>
        <shortName evidence="1">CPO</shortName>
        <shortName evidence="1">Coprogen oxidase</shortName>
        <shortName evidence="1">Coproporphyrinogenase</shortName>
        <ecNumber evidence="1">1.3.3.3</ecNumber>
    </recommendedName>
</protein>
<gene>
    <name evidence="1" type="primary">hemF</name>
    <name type="ordered locus">Bpet3101</name>
</gene>
<comment type="function">
    <text evidence="1">Involved in the heme biosynthesis. Catalyzes the aerobic oxidative decarboxylation of propionate groups of rings A and B of coproporphyrinogen-III to yield the vinyl groups in protoporphyrinogen-IX.</text>
</comment>
<comment type="catalytic activity">
    <reaction evidence="1">
        <text>coproporphyrinogen III + O2 + 2 H(+) = protoporphyrinogen IX + 2 CO2 + 2 H2O</text>
        <dbReference type="Rhea" id="RHEA:18257"/>
        <dbReference type="ChEBI" id="CHEBI:15377"/>
        <dbReference type="ChEBI" id="CHEBI:15378"/>
        <dbReference type="ChEBI" id="CHEBI:15379"/>
        <dbReference type="ChEBI" id="CHEBI:16526"/>
        <dbReference type="ChEBI" id="CHEBI:57307"/>
        <dbReference type="ChEBI" id="CHEBI:57309"/>
        <dbReference type="EC" id="1.3.3.3"/>
    </reaction>
</comment>
<comment type="cofactor">
    <cofactor evidence="1">
        <name>a divalent metal cation</name>
        <dbReference type="ChEBI" id="CHEBI:60240"/>
    </cofactor>
</comment>
<comment type="pathway">
    <text evidence="1">Porphyrin-containing compound metabolism; protoporphyrin-IX biosynthesis; protoporphyrinogen-IX from coproporphyrinogen-III (O2 route): step 1/1.</text>
</comment>
<comment type="subunit">
    <text evidence="1">Homodimer.</text>
</comment>
<comment type="subcellular location">
    <subcellularLocation>
        <location evidence="1">Cytoplasm</location>
    </subcellularLocation>
</comment>
<comment type="similarity">
    <text evidence="1">Belongs to the aerobic coproporphyrinogen-III oxidase family.</text>
</comment>
<organism>
    <name type="scientific">Bordetella petrii (strain ATCC BAA-461 / DSM 12804 / CCUG 43448)</name>
    <dbReference type="NCBI Taxonomy" id="340100"/>
    <lineage>
        <taxon>Bacteria</taxon>
        <taxon>Pseudomonadati</taxon>
        <taxon>Pseudomonadota</taxon>
        <taxon>Betaproteobacteria</taxon>
        <taxon>Burkholderiales</taxon>
        <taxon>Alcaligenaceae</taxon>
        <taxon>Bordetella</taxon>
    </lineage>
</organism>
<dbReference type="EC" id="1.3.3.3" evidence="1"/>
<dbReference type="EMBL" id="AM902716">
    <property type="protein sequence ID" value="CAP43443.1"/>
    <property type="molecule type" value="Genomic_DNA"/>
</dbReference>
<dbReference type="SMR" id="A9ITM7"/>
<dbReference type="STRING" id="94624.Bpet3101"/>
<dbReference type="KEGG" id="bpt:Bpet3101"/>
<dbReference type="eggNOG" id="COG0408">
    <property type="taxonomic scope" value="Bacteria"/>
</dbReference>
<dbReference type="UniPathway" id="UPA00251">
    <property type="reaction ID" value="UER00322"/>
</dbReference>
<dbReference type="Proteomes" id="UP000001225">
    <property type="component" value="Chromosome"/>
</dbReference>
<dbReference type="GO" id="GO:0005737">
    <property type="term" value="C:cytoplasm"/>
    <property type="evidence" value="ECO:0007669"/>
    <property type="project" value="UniProtKB-SubCell"/>
</dbReference>
<dbReference type="GO" id="GO:0004109">
    <property type="term" value="F:coproporphyrinogen oxidase activity"/>
    <property type="evidence" value="ECO:0007669"/>
    <property type="project" value="UniProtKB-UniRule"/>
</dbReference>
<dbReference type="GO" id="GO:0046872">
    <property type="term" value="F:metal ion binding"/>
    <property type="evidence" value="ECO:0007669"/>
    <property type="project" value="UniProtKB-KW"/>
</dbReference>
<dbReference type="GO" id="GO:0042803">
    <property type="term" value="F:protein homodimerization activity"/>
    <property type="evidence" value="ECO:0000250"/>
    <property type="project" value="UniProtKB"/>
</dbReference>
<dbReference type="GO" id="GO:0006782">
    <property type="term" value="P:protoporphyrinogen IX biosynthetic process"/>
    <property type="evidence" value="ECO:0007669"/>
    <property type="project" value="UniProtKB-UniRule"/>
</dbReference>
<dbReference type="FunFam" id="3.40.1500.10:FF:000001">
    <property type="entry name" value="Oxygen-dependent coproporphyrinogen-III oxidase"/>
    <property type="match status" value="1"/>
</dbReference>
<dbReference type="Gene3D" id="3.40.1500.10">
    <property type="entry name" value="Coproporphyrinogen III oxidase, aerobic"/>
    <property type="match status" value="1"/>
</dbReference>
<dbReference type="HAMAP" id="MF_00333">
    <property type="entry name" value="Coprogen_oxidas"/>
    <property type="match status" value="1"/>
</dbReference>
<dbReference type="InterPro" id="IPR001260">
    <property type="entry name" value="Coprogen_oxidase_aer"/>
</dbReference>
<dbReference type="InterPro" id="IPR036406">
    <property type="entry name" value="Coprogen_oxidase_aer_sf"/>
</dbReference>
<dbReference type="InterPro" id="IPR018375">
    <property type="entry name" value="Coprogen_oxidase_CS"/>
</dbReference>
<dbReference type="NCBIfam" id="NF003727">
    <property type="entry name" value="PRK05330.1"/>
    <property type="match status" value="1"/>
</dbReference>
<dbReference type="PANTHER" id="PTHR10755">
    <property type="entry name" value="COPROPORPHYRINOGEN III OXIDASE, MITOCHONDRIAL"/>
    <property type="match status" value="1"/>
</dbReference>
<dbReference type="PANTHER" id="PTHR10755:SF0">
    <property type="entry name" value="OXYGEN-DEPENDENT COPROPORPHYRINOGEN-III OXIDASE, MITOCHONDRIAL"/>
    <property type="match status" value="1"/>
</dbReference>
<dbReference type="Pfam" id="PF01218">
    <property type="entry name" value="Coprogen_oxidas"/>
    <property type="match status" value="1"/>
</dbReference>
<dbReference type="PIRSF" id="PIRSF000166">
    <property type="entry name" value="Coproporphyri_ox"/>
    <property type="match status" value="1"/>
</dbReference>
<dbReference type="PRINTS" id="PR00073">
    <property type="entry name" value="COPRGNOXDASE"/>
</dbReference>
<dbReference type="SUPFAM" id="SSF102886">
    <property type="entry name" value="Coproporphyrinogen III oxidase"/>
    <property type="match status" value="1"/>
</dbReference>
<dbReference type="PROSITE" id="PS01021">
    <property type="entry name" value="COPROGEN_OXIDASE"/>
    <property type="match status" value="1"/>
</dbReference>
<proteinExistence type="inferred from homology"/>
<accession>A9ITM7</accession>
<reference key="1">
    <citation type="journal article" date="2008" name="BMC Genomics">
        <title>The missing link: Bordetella petrii is endowed with both the metabolic versatility of environmental bacteria and virulence traits of pathogenic Bordetellae.</title>
        <authorList>
            <person name="Gross R."/>
            <person name="Guzman C.A."/>
            <person name="Sebaihia M."/>
            <person name="Martin dos Santos V.A.P."/>
            <person name="Pieper D.H."/>
            <person name="Koebnik R."/>
            <person name="Lechner M."/>
            <person name="Bartels D."/>
            <person name="Buhrmester J."/>
            <person name="Choudhuri J.V."/>
            <person name="Ebensen T."/>
            <person name="Gaigalat L."/>
            <person name="Herrmann S."/>
            <person name="Khachane A.N."/>
            <person name="Larisch C."/>
            <person name="Link S."/>
            <person name="Linke B."/>
            <person name="Meyer F."/>
            <person name="Mormann S."/>
            <person name="Nakunst D."/>
            <person name="Rueckert C."/>
            <person name="Schneiker-Bekel S."/>
            <person name="Schulze K."/>
            <person name="Voerholter F.-J."/>
            <person name="Yevsa T."/>
            <person name="Engle J.T."/>
            <person name="Goldman W.E."/>
            <person name="Puehler A."/>
            <person name="Goebel U.B."/>
            <person name="Goesmann A."/>
            <person name="Bloecker H."/>
            <person name="Kaiser O."/>
            <person name="Martinez-Arias R."/>
        </authorList>
    </citation>
    <scope>NUCLEOTIDE SEQUENCE [LARGE SCALE GENOMIC DNA]</scope>
    <source>
        <strain>ATCC BAA-461 / DSM 12804 / CCUG 43448</strain>
    </source>
</reference>